<keyword id="KW-0963">Cytoplasm</keyword>
<keyword id="KW-0507">mRNA processing</keyword>
<keyword id="KW-0508">mRNA splicing</keyword>
<keyword id="KW-0539">Nucleus</keyword>
<keyword id="KW-1185">Reference proteome</keyword>
<keyword id="KW-0677">Repeat</keyword>
<keyword id="KW-0747">Spliceosome</keyword>
<keyword id="KW-0853">WD repeat</keyword>
<evidence type="ECO:0000250" key="1"/>
<evidence type="ECO:0000305" key="2"/>
<protein>
    <recommendedName>
        <fullName>Pre-mRNA-splicing factor PRP46</fullName>
    </recommendedName>
    <alternativeName>
        <fullName>Pre-mRNA-processing protein 46</fullName>
    </alternativeName>
</protein>
<proteinExistence type="inferred from homology"/>
<gene>
    <name type="primary">PRP46</name>
    <name type="ordered locus">DEHA2C12650g</name>
</gene>
<feature type="chain" id="PRO_0000051164" description="Pre-mRNA-splicing factor PRP46">
    <location>
        <begin position="1"/>
        <end position="417"/>
    </location>
</feature>
<feature type="repeat" description="WD 1">
    <location>
        <begin position="119"/>
        <end position="159"/>
    </location>
</feature>
<feature type="repeat" description="WD 2">
    <location>
        <begin position="162"/>
        <end position="201"/>
    </location>
</feature>
<feature type="repeat" description="WD 3">
    <location>
        <begin position="209"/>
        <end position="248"/>
    </location>
</feature>
<feature type="repeat" description="WD 4">
    <location>
        <begin position="251"/>
        <end position="290"/>
    </location>
</feature>
<feature type="repeat" description="WD 5">
    <location>
        <begin position="293"/>
        <end position="334"/>
    </location>
</feature>
<feature type="repeat" description="WD 6">
    <location>
        <begin position="337"/>
        <end position="376"/>
    </location>
</feature>
<feature type="repeat" description="WD 7">
    <location>
        <begin position="385"/>
        <end position="417"/>
    </location>
</feature>
<comment type="function">
    <text evidence="1">Involved in pre-mRNA splicing and required for cell cycle progression at G2/M.</text>
</comment>
<comment type="subunit">
    <text evidence="1">Associated with the spliceosome.</text>
</comment>
<comment type="subcellular location">
    <subcellularLocation>
        <location evidence="1">Cytoplasm</location>
    </subcellularLocation>
    <subcellularLocation>
        <location evidence="1">Nucleus</location>
    </subcellularLocation>
</comment>
<comment type="similarity">
    <text evidence="2">Belongs to the WD repeat PRL1/PRL2 family.</text>
</comment>
<organism>
    <name type="scientific">Debaryomyces hansenii (strain ATCC 36239 / CBS 767 / BCRC 21394 / JCM 1990 / NBRC 0083 / IGC 2968)</name>
    <name type="common">Yeast</name>
    <name type="synonym">Torulaspora hansenii</name>
    <dbReference type="NCBI Taxonomy" id="284592"/>
    <lineage>
        <taxon>Eukaryota</taxon>
        <taxon>Fungi</taxon>
        <taxon>Dikarya</taxon>
        <taxon>Ascomycota</taxon>
        <taxon>Saccharomycotina</taxon>
        <taxon>Pichiomycetes</taxon>
        <taxon>Debaryomycetaceae</taxon>
        <taxon>Debaryomyces</taxon>
    </lineage>
</organism>
<reference key="1">
    <citation type="journal article" date="2004" name="Nature">
        <title>Genome evolution in yeasts.</title>
        <authorList>
            <person name="Dujon B."/>
            <person name="Sherman D."/>
            <person name="Fischer G."/>
            <person name="Durrens P."/>
            <person name="Casaregola S."/>
            <person name="Lafontaine I."/>
            <person name="de Montigny J."/>
            <person name="Marck C."/>
            <person name="Neuveglise C."/>
            <person name="Talla E."/>
            <person name="Goffard N."/>
            <person name="Frangeul L."/>
            <person name="Aigle M."/>
            <person name="Anthouard V."/>
            <person name="Babour A."/>
            <person name="Barbe V."/>
            <person name="Barnay S."/>
            <person name="Blanchin S."/>
            <person name="Beckerich J.-M."/>
            <person name="Beyne E."/>
            <person name="Bleykasten C."/>
            <person name="Boisrame A."/>
            <person name="Boyer J."/>
            <person name="Cattolico L."/>
            <person name="Confanioleri F."/>
            <person name="de Daruvar A."/>
            <person name="Despons L."/>
            <person name="Fabre E."/>
            <person name="Fairhead C."/>
            <person name="Ferry-Dumazet H."/>
            <person name="Groppi A."/>
            <person name="Hantraye F."/>
            <person name="Hennequin C."/>
            <person name="Jauniaux N."/>
            <person name="Joyet P."/>
            <person name="Kachouri R."/>
            <person name="Kerrest A."/>
            <person name="Koszul R."/>
            <person name="Lemaire M."/>
            <person name="Lesur I."/>
            <person name="Ma L."/>
            <person name="Muller H."/>
            <person name="Nicaud J.-M."/>
            <person name="Nikolski M."/>
            <person name="Oztas S."/>
            <person name="Ozier-Kalogeropoulos O."/>
            <person name="Pellenz S."/>
            <person name="Potier S."/>
            <person name="Richard G.-F."/>
            <person name="Straub M.-L."/>
            <person name="Suleau A."/>
            <person name="Swennen D."/>
            <person name="Tekaia F."/>
            <person name="Wesolowski-Louvel M."/>
            <person name="Westhof E."/>
            <person name="Wirth B."/>
            <person name="Zeniou-Meyer M."/>
            <person name="Zivanovic Y."/>
            <person name="Bolotin-Fukuhara M."/>
            <person name="Thierry A."/>
            <person name="Bouchier C."/>
            <person name="Caudron B."/>
            <person name="Scarpelli C."/>
            <person name="Gaillardin C."/>
            <person name="Weissenbach J."/>
            <person name="Wincker P."/>
            <person name="Souciet J.-L."/>
        </authorList>
    </citation>
    <scope>NUCLEOTIDE SEQUENCE [LARGE SCALE GENOMIC DNA]</scope>
    <source>
        <strain>ATCC 36239 / CBS 767 / BCRC 21394 / JCM 1990 / NBRC 0083 / IGC 2968</strain>
    </source>
</reference>
<sequence>MNFNIIIKIICENIQLAPIINMVSYKELFNINDTDLIVPSDTLSEAVYDNSKLDYIFQNVNRRNRDEVEDESINIQTQLPKQQNQQISKDMSEVGSKQVSEIRPDSDSRWKLLRVMAGAHQGWVRSCTVDPVTNKWFVTGSSDSTIKIWDLASSNLKATITGHIMGVRSLAVSSRYPYLFSGSEDKTVKCWDLERTNSSSGCQIRNYHGHVGGIYAMALHPELDLLFTGGRDSVIRVWDLRSRTEIMVLSGHRSDITSIASQIGDPQIITSSMDATIRLWDIRKATTQLALTHHSKSIRSMAMHPQEMTMCSGDTSGNLKEWLLPGGELLNEFGHSGENKIINTLSINPSNNTLFSGYDDGRMEFYDYVSGDLLQSDATTPVTGSTESAIYASTFDMSGLRLITCEGDKSIKIWGEE</sequence>
<dbReference type="EMBL" id="CR382135">
    <property type="protein sequence ID" value="CAG86301.2"/>
    <property type="molecule type" value="Genomic_DNA"/>
</dbReference>
<dbReference type="RefSeq" id="XP_458225.2">
    <property type="nucleotide sequence ID" value="XM_458225.1"/>
</dbReference>
<dbReference type="SMR" id="Q6BU94"/>
<dbReference type="FunCoup" id="Q6BU94">
    <property type="interactions" value="1024"/>
</dbReference>
<dbReference type="STRING" id="284592.Q6BU94"/>
<dbReference type="GeneID" id="2899988"/>
<dbReference type="KEGG" id="dha:DEHA2C12650g"/>
<dbReference type="VEuPathDB" id="FungiDB:DEHA2C12650g"/>
<dbReference type="eggNOG" id="KOG0285">
    <property type="taxonomic scope" value="Eukaryota"/>
</dbReference>
<dbReference type="HOGENOM" id="CLU_000288_72_0_1"/>
<dbReference type="InParanoid" id="Q6BU94"/>
<dbReference type="OMA" id="FAMCFDQ"/>
<dbReference type="OrthoDB" id="10256122at2759"/>
<dbReference type="Proteomes" id="UP000000599">
    <property type="component" value="Chromosome C"/>
</dbReference>
<dbReference type="GO" id="GO:0071013">
    <property type="term" value="C:catalytic step 2 spliceosome"/>
    <property type="evidence" value="ECO:0007669"/>
    <property type="project" value="TreeGrafter"/>
</dbReference>
<dbReference type="GO" id="GO:0005737">
    <property type="term" value="C:cytoplasm"/>
    <property type="evidence" value="ECO:0007669"/>
    <property type="project" value="UniProtKB-SubCell"/>
</dbReference>
<dbReference type="GO" id="GO:0071014">
    <property type="term" value="C:post-mRNA release spliceosomal complex"/>
    <property type="evidence" value="ECO:0007669"/>
    <property type="project" value="EnsemblFungi"/>
</dbReference>
<dbReference type="GO" id="GO:0071011">
    <property type="term" value="C:precatalytic spliceosome"/>
    <property type="evidence" value="ECO:0007669"/>
    <property type="project" value="TreeGrafter"/>
</dbReference>
<dbReference type="GO" id="GO:0000974">
    <property type="term" value="C:Prp19 complex"/>
    <property type="evidence" value="ECO:0007669"/>
    <property type="project" value="EnsemblFungi"/>
</dbReference>
<dbReference type="GO" id="GO:0045292">
    <property type="term" value="P:mRNA cis splicing, via spliceosome"/>
    <property type="evidence" value="ECO:0007669"/>
    <property type="project" value="EnsemblFungi"/>
</dbReference>
<dbReference type="CDD" id="cd00200">
    <property type="entry name" value="WD40"/>
    <property type="match status" value="1"/>
</dbReference>
<dbReference type="Gene3D" id="2.130.10.10">
    <property type="entry name" value="YVTN repeat-like/Quinoprotein amine dehydrogenase"/>
    <property type="match status" value="1"/>
</dbReference>
<dbReference type="InterPro" id="IPR020472">
    <property type="entry name" value="G-protein_beta_WD-40_rep"/>
</dbReference>
<dbReference type="InterPro" id="IPR045241">
    <property type="entry name" value="Prp46/PLRG1-like"/>
</dbReference>
<dbReference type="InterPro" id="IPR015943">
    <property type="entry name" value="WD40/YVTN_repeat-like_dom_sf"/>
</dbReference>
<dbReference type="InterPro" id="IPR019775">
    <property type="entry name" value="WD40_repeat_CS"/>
</dbReference>
<dbReference type="InterPro" id="IPR036322">
    <property type="entry name" value="WD40_repeat_dom_sf"/>
</dbReference>
<dbReference type="InterPro" id="IPR001680">
    <property type="entry name" value="WD40_rpt"/>
</dbReference>
<dbReference type="PANTHER" id="PTHR19923:SF0">
    <property type="entry name" value="PLEIOTROPIC REGULATOR 1"/>
    <property type="match status" value="1"/>
</dbReference>
<dbReference type="PANTHER" id="PTHR19923">
    <property type="entry name" value="WD40 REPEAT PROTEINPRL1/PRL2-RELATED"/>
    <property type="match status" value="1"/>
</dbReference>
<dbReference type="Pfam" id="PF00400">
    <property type="entry name" value="WD40"/>
    <property type="match status" value="7"/>
</dbReference>
<dbReference type="PRINTS" id="PR00320">
    <property type="entry name" value="GPROTEINBRPT"/>
</dbReference>
<dbReference type="SMART" id="SM00320">
    <property type="entry name" value="WD40"/>
    <property type="match status" value="7"/>
</dbReference>
<dbReference type="SUPFAM" id="SSF50978">
    <property type="entry name" value="WD40 repeat-like"/>
    <property type="match status" value="1"/>
</dbReference>
<dbReference type="PROSITE" id="PS00678">
    <property type="entry name" value="WD_REPEATS_1"/>
    <property type="match status" value="2"/>
</dbReference>
<dbReference type="PROSITE" id="PS50082">
    <property type="entry name" value="WD_REPEATS_2"/>
    <property type="match status" value="6"/>
</dbReference>
<dbReference type="PROSITE" id="PS50294">
    <property type="entry name" value="WD_REPEATS_REGION"/>
    <property type="match status" value="1"/>
</dbReference>
<name>PRP46_DEBHA</name>
<accession>Q6BU94</accession>